<organism>
    <name type="scientific">Ligilactobacillus salivarius (strain UCC118)</name>
    <name type="common">Lactobacillus salivarius</name>
    <dbReference type="NCBI Taxonomy" id="362948"/>
    <lineage>
        <taxon>Bacteria</taxon>
        <taxon>Bacillati</taxon>
        <taxon>Bacillota</taxon>
        <taxon>Bacilli</taxon>
        <taxon>Lactobacillales</taxon>
        <taxon>Lactobacillaceae</taxon>
        <taxon>Ligilactobacillus</taxon>
    </lineage>
</organism>
<keyword id="KW-0067">ATP-binding</keyword>
<keyword id="KW-0963">Cytoplasm</keyword>
<keyword id="KW-0418">Kinase</keyword>
<keyword id="KW-0547">Nucleotide-binding</keyword>
<keyword id="KW-1185">Reference proteome</keyword>
<keyword id="KW-0808">Transferase</keyword>
<sequence>MVKKLQIAIDGPASAGKSTVAKLVAKKLGYIYCDTGAMYRAVTYAALKANISLDDDEALKNLLQDFKLEFVPAEPEQKVFVNGEEVTQIIRTPDITNNVSLVSAQPSVRQDLTHRQQEIADNGGIVMDGRDIGTTVLPNAEVKIFLVASVEQRALRRYKENIAKGIDTPLEVLEKEIAERDYKDSHRKISPLVQAKDAVKVDTTPLTIDEVVNEIMNIIEERNH</sequence>
<proteinExistence type="inferred from homology"/>
<comment type="catalytic activity">
    <reaction evidence="1">
        <text>CMP + ATP = CDP + ADP</text>
        <dbReference type="Rhea" id="RHEA:11600"/>
        <dbReference type="ChEBI" id="CHEBI:30616"/>
        <dbReference type="ChEBI" id="CHEBI:58069"/>
        <dbReference type="ChEBI" id="CHEBI:60377"/>
        <dbReference type="ChEBI" id="CHEBI:456216"/>
        <dbReference type="EC" id="2.7.4.25"/>
    </reaction>
</comment>
<comment type="catalytic activity">
    <reaction evidence="1">
        <text>dCMP + ATP = dCDP + ADP</text>
        <dbReference type="Rhea" id="RHEA:25094"/>
        <dbReference type="ChEBI" id="CHEBI:30616"/>
        <dbReference type="ChEBI" id="CHEBI:57566"/>
        <dbReference type="ChEBI" id="CHEBI:58593"/>
        <dbReference type="ChEBI" id="CHEBI:456216"/>
        <dbReference type="EC" id="2.7.4.25"/>
    </reaction>
</comment>
<comment type="subcellular location">
    <subcellularLocation>
        <location evidence="1">Cytoplasm</location>
    </subcellularLocation>
</comment>
<comment type="similarity">
    <text evidence="1">Belongs to the cytidylate kinase family. Type 1 subfamily.</text>
</comment>
<dbReference type="EC" id="2.7.4.25" evidence="1"/>
<dbReference type="EMBL" id="CP000233">
    <property type="protein sequence ID" value="ABD99710.1"/>
    <property type="molecule type" value="Genomic_DNA"/>
</dbReference>
<dbReference type="RefSeq" id="WP_003700259.1">
    <property type="nucleotide sequence ID" value="NC_007929.1"/>
</dbReference>
<dbReference type="RefSeq" id="YP_535793.1">
    <property type="nucleotide sequence ID" value="NC_007929.1"/>
</dbReference>
<dbReference type="SMR" id="Q1WTS4"/>
<dbReference type="STRING" id="362948.LSL_0900"/>
<dbReference type="KEGG" id="lsl:LSL_0900"/>
<dbReference type="PATRIC" id="fig|362948.14.peg.975"/>
<dbReference type="HOGENOM" id="CLU_079959_0_2_9"/>
<dbReference type="OrthoDB" id="9807434at2"/>
<dbReference type="Proteomes" id="UP000006559">
    <property type="component" value="Chromosome"/>
</dbReference>
<dbReference type="GO" id="GO:0005829">
    <property type="term" value="C:cytosol"/>
    <property type="evidence" value="ECO:0007669"/>
    <property type="project" value="TreeGrafter"/>
</dbReference>
<dbReference type="GO" id="GO:0005524">
    <property type="term" value="F:ATP binding"/>
    <property type="evidence" value="ECO:0007669"/>
    <property type="project" value="UniProtKB-UniRule"/>
</dbReference>
<dbReference type="GO" id="GO:0036430">
    <property type="term" value="F:CMP kinase activity"/>
    <property type="evidence" value="ECO:0007669"/>
    <property type="project" value="RHEA"/>
</dbReference>
<dbReference type="GO" id="GO:0036431">
    <property type="term" value="F:dCMP kinase activity"/>
    <property type="evidence" value="ECO:0007669"/>
    <property type="project" value="RHEA"/>
</dbReference>
<dbReference type="GO" id="GO:0015949">
    <property type="term" value="P:nucleobase-containing small molecule interconversion"/>
    <property type="evidence" value="ECO:0007669"/>
    <property type="project" value="TreeGrafter"/>
</dbReference>
<dbReference type="GO" id="GO:0006220">
    <property type="term" value="P:pyrimidine nucleotide metabolic process"/>
    <property type="evidence" value="ECO:0007669"/>
    <property type="project" value="UniProtKB-UniRule"/>
</dbReference>
<dbReference type="CDD" id="cd02020">
    <property type="entry name" value="CMPK"/>
    <property type="match status" value="1"/>
</dbReference>
<dbReference type="FunFam" id="3.40.50.300:FF:000484">
    <property type="entry name" value="Cytidylate kinase"/>
    <property type="match status" value="1"/>
</dbReference>
<dbReference type="Gene3D" id="3.40.50.300">
    <property type="entry name" value="P-loop containing nucleotide triphosphate hydrolases"/>
    <property type="match status" value="1"/>
</dbReference>
<dbReference type="HAMAP" id="MF_00238">
    <property type="entry name" value="Cytidyl_kinase_type1"/>
    <property type="match status" value="1"/>
</dbReference>
<dbReference type="InterPro" id="IPR003136">
    <property type="entry name" value="Cytidylate_kin"/>
</dbReference>
<dbReference type="InterPro" id="IPR011994">
    <property type="entry name" value="Cytidylate_kinase_dom"/>
</dbReference>
<dbReference type="InterPro" id="IPR027417">
    <property type="entry name" value="P-loop_NTPase"/>
</dbReference>
<dbReference type="NCBIfam" id="TIGR00017">
    <property type="entry name" value="cmk"/>
    <property type="match status" value="1"/>
</dbReference>
<dbReference type="PANTHER" id="PTHR21299:SF2">
    <property type="entry name" value="CYTIDYLATE KINASE"/>
    <property type="match status" value="1"/>
</dbReference>
<dbReference type="PANTHER" id="PTHR21299">
    <property type="entry name" value="CYTIDYLATE KINASE/PANTOATE-BETA-ALANINE LIGASE"/>
    <property type="match status" value="1"/>
</dbReference>
<dbReference type="Pfam" id="PF02224">
    <property type="entry name" value="Cytidylate_kin"/>
    <property type="match status" value="1"/>
</dbReference>
<dbReference type="SUPFAM" id="SSF52540">
    <property type="entry name" value="P-loop containing nucleoside triphosphate hydrolases"/>
    <property type="match status" value="1"/>
</dbReference>
<name>KCY_LIGS1</name>
<feature type="chain" id="PRO_1000119022" description="Cytidylate kinase">
    <location>
        <begin position="1"/>
        <end position="224"/>
    </location>
</feature>
<feature type="binding site" evidence="1">
    <location>
        <begin position="11"/>
        <end position="19"/>
    </location>
    <ligand>
        <name>ATP</name>
        <dbReference type="ChEBI" id="CHEBI:30616"/>
    </ligand>
</feature>
<accession>Q1WTS4</accession>
<reference key="1">
    <citation type="journal article" date="2006" name="Proc. Natl. Acad. Sci. U.S.A.">
        <title>Multireplicon genome architecture of Lactobacillus salivarius.</title>
        <authorList>
            <person name="Claesson M.J."/>
            <person name="Li Y."/>
            <person name="Leahy S."/>
            <person name="Canchaya C."/>
            <person name="van Pijkeren J.P."/>
            <person name="Cerdeno-Tarraga A.M."/>
            <person name="Parkhill J."/>
            <person name="Flynn S."/>
            <person name="O'Sullivan G.C."/>
            <person name="Collins J.K."/>
            <person name="Higgins D."/>
            <person name="Shanahan F."/>
            <person name="Fitzgerald G.F."/>
            <person name="van Sinderen D."/>
            <person name="O'Toole P.W."/>
        </authorList>
    </citation>
    <scope>NUCLEOTIDE SEQUENCE [LARGE SCALE GENOMIC DNA]</scope>
    <source>
        <strain>UCC118</strain>
    </source>
</reference>
<protein>
    <recommendedName>
        <fullName evidence="1">Cytidylate kinase</fullName>
        <shortName evidence="1">CK</shortName>
        <ecNumber evidence="1">2.7.4.25</ecNumber>
    </recommendedName>
    <alternativeName>
        <fullName evidence="1">Cytidine monophosphate kinase</fullName>
        <shortName evidence="1">CMP kinase</shortName>
    </alternativeName>
</protein>
<gene>
    <name evidence="1" type="primary">cmk</name>
    <name type="ordered locus">LSL_0900</name>
</gene>
<evidence type="ECO:0000255" key="1">
    <source>
        <dbReference type="HAMAP-Rule" id="MF_00238"/>
    </source>
</evidence>